<accession>Q8ZC96</accession>
<accession>Q0WCF9</accession>
<keyword id="KW-0963">Cytoplasm</keyword>
<keyword id="KW-0238">DNA-binding</keyword>
<keyword id="KW-1185">Reference proteome</keyword>
<gene>
    <name type="ordered locus">YPO3121</name>
    <name type="ordered locus">y1061</name>
    <name type="ordered locus">YP_0808</name>
</gene>
<feature type="chain" id="PRO_0000170471" description="Nucleoid-associated protein YPO3121/y1061/YP_0808">
    <location>
        <begin position="1"/>
        <end position="110"/>
    </location>
</feature>
<feature type="region of interest" description="Disordered" evidence="2">
    <location>
        <begin position="90"/>
        <end position="110"/>
    </location>
</feature>
<reference key="1">
    <citation type="journal article" date="2001" name="Nature">
        <title>Genome sequence of Yersinia pestis, the causative agent of plague.</title>
        <authorList>
            <person name="Parkhill J."/>
            <person name="Wren B.W."/>
            <person name="Thomson N.R."/>
            <person name="Titball R.W."/>
            <person name="Holden M.T.G."/>
            <person name="Prentice M.B."/>
            <person name="Sebaihia M."/>
            <person name="James K.D."/>
            <person name="Churcher C.M."/>
            <person name="Mungall K.L."/>
            <person name="Baker S."/>
            <person name="Basham D."/>
            <person name="Bentley S.D."/>
            <person name="Brooks K."/>
            <person name="Cerdeno-Tarraga A.-M."/>
            <person name="Chillingworth T."/>
            <person name="Cronin A."/>
            <person name="Davies R.M."/>
            <person name="Davis P."/>
            <person name="Dougan G."/>
            <person name="Feltwell T."/>
            <person name="Hamlin N."/>
            <person name="Holroyd S."/>
            <person name="Jagels K."/>
            <person name="Karlyshev A.V."/>
            <person name="Leather S."/>
            <person name="Moule S."/>
            <person name="Oyston P.C.F."/>
            <person name="Quail M.A."/>
            <person name="Rutherford K.M."/>
            <person name="Simmonds M."/>
            <person name="Skelton J."/>
            <person name="Stevens K."/>
            <person name="Whitehead S."/>
            <person name="Barrell B.G."/>
        </authorList>
    </citation>
    <scope>NUCLEOTIDE SEQUENCE [LARGE SCALE GENOMIC DNA]</scope>
    <source>
        <strain>CO-92 / Biovar Orientalis</strain>
    </source>
</reference>
<reference key="2">
    <citation type="journal article" date="2002" name="J. Bacteriol.">
        <title>Genome sequence of Yersinia pestis KIM.</title>
        <authorList>
            <person name="Deng W."/>
            <person name="Burland V."/>
            <person name="Plunkett G. III"/>
            <person name="Boutin A."/>
            <person name="Mayhew G.F."/>
            <person name="Liss P."/>
            <person name="Perna N.T."/>
            <person name="Rose D.J."/>
            <person name="Mau B."/>
            <person name="Zhou S."/>
            <person name="Schwartz D.C."/>
            <person name="Fetherston J.D."/>
            <person name="Lindler L.E."/>
            <person name="Brubaker R.R."/>
            <person name="Plano G.V."/>
            <person name="Straley S.C."/>
            <person name="McDonough K.A."/>
            <person name="Nilles M.L."/>
            <person name="Matson J.S."/>
            <person name="Blattner F.R."/>
            <person name="Perry R.D."/>
        </authorList>
    </citation>
    <scope>NUCLEOTIDE SEQUENCE [LARGE SCALE GENOMIC DNA]</scope>
    <source>
        <strain>KIM10+ / Biovar Mediaevalis</strain>
    </source>
</reference>
<reference key="3">
    <citation type="journal article" date="2004" name="DNA Res.">
        <title>Complete genome sequence of Yersinia pestis strain 91001, an isolate avirulent to humans.</title>
        <authorList>
            <person name="Song Y."/>
            <person name="Tong Z."/>
            <person name="Wang J."/>
            <person name="Wang L."/>
            <person name="Guo Z."/>
            <person name="Han Y."/>
            <person name="Zhang J."/>
            <person name="Pei D."/>
            <person name="Zhou D."/>
            <person name="Qin H."/>
            <person name="Pang X."/>
            <person name="Han Y."/>
            <person name="Zhai J."/>
            <person name="Li M."/>
            <person name="Cui B."/>
            <person name="Qi Z."/>
            <person name="Jin L."/>
            <person name="Dai R."/>
            <person name="Chen F."/>
            <person name="Li S."/>
            <person name="Ye C."/>
            <person name="Du Z."/>
            <person name="Lin W."/>
            <person name="Wang J."/>
            <person name="Yu J."/>
            <person name="Yang H."/>
            <person name="Wang J."/>
            <person name="Huang P."/>
            <person name="Yang R."/>
        </authorList>
    </citation>
    <scope>NUCLEOTIDE SEQUENCE [LARGE SCALE GENOMIC DNA]</scope>
    <source>
        <strain>91001 / Biovar Mediaevalis</strain>
    </source>
</reference>
<name>Y3121_YERPE</name>
<dbReference type="EMBL" id="AL590842">
    <property type="protein sequence ID" value="CAL21717.1"/>
    <property type="molecule type" value="Genomic_DNA"/>
</dbReference>
<dbReference type="EMBL" id="AE009952">
    <property type="protein sequence ID" value="AAM84642.1"/>
    <property type="molecule type" value="Genomic_DNA"/>
</dbReference>
<dbReference type="EMBL" id="AE017042">
    <property type="protein sequence ID" value="AAS61073.1"/>
    <property type="molecule type" value="Genomic_DNA"/>
</dbReference>
<dbReference type="PIR" id="AB0379">
    <property type="entry name" value="AB0379"/>
</dbReference>
<dbReference type="RefSeq" id="WP_002208604.1">
    <property type="nucleotide sequence ID" value="NZ_WUCM01000009.1"/>
</dbReference>
<dbReference type="RefSeq" id="YP_002348029.1">
    <property type="nucleotide sequence ID" value="NC_003143.1"/>
</dbReference>
<dbReference type="SMR" id="Q8ZC96"/>
<dbReference type="STRING" id="214092.YPO3121"/>
<dbReference type="PaxDb" id="214092-YPO3121"/>
<dbReference type="DNASU" id="1146008"/>
<dbReference type="EnsemblBacteria" id="AAS61073">
    <property type="protein sequence ID" value="AAS61073"/>
    <property type="gene ID" value="YP_0808"/>
</dbReference>
<dbReference type="KEGG" id="ype:YPO3121"/>
<dbReference type="KEGG" id="ypk:y1061"/>
<dbReference type="KEGG" id="ypm:YP_0808"/>
<dbReference type="PATRIC" id="fig|214092.21.peg.3577"/>
<dbReference type="eggNOG" id="COG0718">
    <property type="taxonomic scope" value="Bacteria"/>
</dbReference>
<dbReference type="HOGENOM" id="CLU_140930_0_0_6"/>
<dbReference type="OMA" id="MGNMMKQ"/>
<dbReference type="OrthoDB" id="9808738at2"/>
<dbReference type="Proteomes" id="UP000000815">
    <property type="component" value="Chromosome"/>
</dbReference>
<dbReference type="Proteomes" id="UP000001019">
    <property type="component" value="Chromosome"/>
</dbReference>
<dbReference type="Proteomes" id="UP000002490">
    <property type="component" value="Chromosome"/>
</dbReference>
<dbReference type="GO" id="GO:0043590">
    <property type="term" value="C:bacterial nucleoid"/>
    <property type="evidence" value="ECO:0007669"/>
    <property type="project" value="UniProtKB-UniRule"/>
</dbReference>
<dbReference type="GO" id="GO:0005829">
    <property type="term" value="C:cytosol"/>
    <property type="evidence" value="ECO:0000318"/>
    <property type="project" value="GO_Central"/>
</dbReference>
<dbReference type="GO" id="GO:0003677">
    <property type="term" value="F:DNA binding"/>
    <property type="evidence" value="ECO:0000318"/>
    <property type="project" value="GO_Central"/>
</dbReference>
<dbReference type="FunFam" id="3.30.1310.10:FF:000001">
    <property type="entry name" value="Nucleoid-associated protein YbaB"/>
    <property type="match status" value="1"/>
</dbReference>
<dbReference type="Gene3D" id="3.30.1310.10">
    <property type="entry name" value="Nucleoid-associated protein YbaB-like domain"/>
    <property type="match status" value="1"/>
</dbReference>
<dbReference type="HAMAP" id="MF_00274">
    <property type="entry name" value="DNA_YbaB_EbfC"/>
    <property type="match status" value="1"/>
</dbReference>
<dbReference type="InterPro" id="IPR036894">
    <property type="entry name" value="YbaB-like_sf"/>
</dbReference>
<dbReference type="InterPro" id="IPR004401">
    <property type="entry name" value="YbaB/EbfC"/>
</dbReference>
<dbReference type="NCBIfam" id="TIGR00103">
    <property type="entry name" value="DNA_YbaB_EbfC"/>
    <property type="match status" value="1"/>
</dbReference>
<dbReference type="PANTHER" id="PTHR33449">
    <property type="entry name" value="NUCLEOID-ASSOCIATED PROTEIN YBAB"/>
    <property type="match status" value="1"/>
</dbReference>
<dbReference type="PANTHER" id="PTHR33449:SF1">
    <property type="entry name" value="NUCLEOID-ASSOCIATED PROTEIN YBAB"/>
    <property type="match status" value="1"/>
</dbReference>
<dbReference type="Pfam" id="PF02575">
    <property type="entry name" value="YbaB_DNA_bd"/>
    <property type="match status" value="1"/>
</dbReference>
<dbReference type="PIRSF" id="PIRSF004555">
    <property type="entry name" value="UCP004555"/>
    <property type="match status" value="1"/>
</dbReference>
<dbReference type="SUPFAM" id="SSF82607">
    <property type="entry name" value="YbaB-like"/>
    <property type="match status" value="1"/>
</dbReference>
<comment type="function">
    <text evidence="1">Binds to DNA and alters its conformation. May be involved in regulation of gene expression, nucleoid organization and DNA protection.</text>
</comment>
<comment type="subunit">
    <text evidence="1">Homodimer.</text>
</comment>
<comment type="subcellular location">
    <subcellularLocation>
        <location evidence="1">Cytoplasm</location>
        <location evidence="1">Nucleoid</location>
    </subcellularLocation>
</comment>
<comment type="similarity">
    <text evidence="1">Belongs to the YbaB/EbfC family.</text>
</comment>
<sequence>MFGKGGIGNLMKQAQQMQEKMQQMQEEVAKLEVTGESGAGLVKVTINGAHNCRRVEIDPSLLVEDDKEMLEDLIAAALNDAARRIDETQKEKMASVSNGMQLPPGFKMPF</sequence>
<proteinExistence type="inferred from homology"/>
<organism>
    <name type="scientific">Yersinia pestis</name>
    <dbReference type="NCBI Taxonomy" id="632"/>
    <lineage>
        <taxon>Bacteria</taxon>
        <taxon>Pseudomonadati</taxon>
        <taxon>Pseudomonadota</taxon>
        <taxon>Gammaproteobacteria</taxon>
        <taxon>Enterobacterales</taxon>
        <taxon>Yersiniaceae</taxon>
        <taxon>Yersinia</taxon>
    </lineage>
</organism>
<evidence type="ECO:0000255" key="1">
    <source>
        <dbReference type="HAMAP-Rule" id="MF_00274"/>
    </source>
</evidence>
<evidence type="ECO:0000256" key="2">
    <source>
        <dbReference type="SAM" id="MobiDB-lite"/>
    </source>
</evidence>
<protein>
    <recommendedName>
        <fullName evidence="1">Nucleoid-associated protein YPO3121/y1061/YP_0808</fullName>
    </recommendedName>
</protein>